<sequence length="103" mass="11744">MASFSLSILVFFFSALVLVPQGFAEYYLYPAYRPPQTKPPVNKPSHKEPPVNKPPHKEPPVHKPPHKDPPVNKPPQKESPVHKPPRKESPTHRHPPAEDNIHF</sequence>
<dbReference type="EMBL" id="X68032">
    <property type="protein sequence ID" value="CAA48173.1"/>
    <property type="molecule type" value="Genomic_DNA"/>
</dbReference>
<dbReference type="PIR" id="JQ1668">
    <property type="entry name" value="JQ1668"/>
</dbReference>
<dbReference type="RefSeq" id="XP_013459222.1">
    <property type="nucleotide sequence ID" value="XM_013603768.1"/>
</dbReference>
<dbReference type="GeneID" id="25490361"/>
<dbReference type="KEGG" id="mtr:25490361"/>
<dbReference type="HOGENOM" id="CLU_2267739_0_0_1"/>
<dbReference type="ExpressionAtlas" id="P30365">
    <property type="expression patterns" value="differential"/>
</dbReference>
<dbReference type="GO" id="GO:0005576">
    <property type="term" value="C:extracellular region"/>
    <property type="evidence" value="ECO:0007669"/>
    <property type="project" value="UniProtKB-KW"/>
</dbReference>
<dbReference type="GO" id="GO:0009877">
    <property type="term" value="P:nodulation"/>
    <property type="evidence" value="ECO:0007669"/>
    <property type="project" value="UniProtKB-KW"/>
</dbReference>
<dbReference type="InterPro" id="IPR051308">
    <property type="entry name" value="Proline-rich_CW_protein"/>
</dbReference>
<dbReference type="PANTHER" id="PTHR34629">
    <property type="entry name" value="PROLINE-RICH EXTENSIN-LIKE PROTEIN EPR1"/>
    <property type="match status" value="1"/>
</dbReference>
<dbReference type="PANTHER" id="PTHR34629:SF4">
    <property type="entry name" value="REPETITIVE PROLINE-RICH CELL WALL PROTEIN 3"/>
    <property type="match status" value="1"/>
</dbReference>
<reference key="1">
    <citation type="journal article" date="1992" name="Plant Cell">
        <title>Rhizobium meliloti elicits transient expression of the early nodulin gene ENOD12 in the differentiating root epidermis of transgenic alfalfa.</title>
        <authorList>
            <person name="Pichon M."/>
            <person name="Journet E.-P."/>
            <person name="Dedieu A."/>
            <person name="de Billy F."/>
            <person name="Truchet G."/>
            <person name="Barker D.G."/>
        </authorList>
    </citation>
    <scope>NUCLEOTIDE SEQUENCE [GENOMIC DNA]</scope>
    <source>
        <strain>cv. Jemalong</strain>
    </source>
</reference>
<protein>
    <recommendedName>
        <fullName>Early nodulin-12</fullName>
        <shortName>N-12</shortName>
    </recommendedName>
</protein>
<gene>
    <name type="primary">ENOD12</name>
</gene>
<organism>
    <name type="scientific">Medicago truncatula</name>
    <name type="common">Barrel medic</name>
    <name type="synonym">Medicago tribuloides</name>
    <dbReference type="NCBI Taxonomy" id="3880"/>
    <lineage>
        <taxon>Eukaryota</taxon>
        <taxon>Viridiplantae</taxon>
        <taxon>Streptophyta</taxon>
        <taxon>Embryophyta</taxon>
        <taxon>Tracheophyta</taxon>
        <taxon>Spermatophyta</taxon>
        <taxon>Magnoliopsida</taxon>
        <taxon>eudicotyledons</taxon>
        <taxon>Gunneridae</taxon>
        <taxon>Pentapetalae</taxon>
        <taxon>rosids</taxon>
        <taxon>fabids</taxon>
        <taxon>Fabales</taxon>
        <taxon>Fabaceae</taxon>
        <taxon>Papilionoideae</taxon>
        <taxon>50 kb inversion clade</taxon>
        <taxon>NPAAA clade</taxon>
        <taxon>Hologalegina</taxon>
        <taxon>IRL clade</taxon>
        <taxon>Trifolieae</taxon>
        <taxon>Medicago</taxon>
    </lineage>
</organism>
<feature type="signal peptide" evidence="1">
    <location>
        <begin position="1"/>
        <end position="24"/>
    </location>
</feature>
<feature type="chain" id="PRO_0000019803" description="Early nodulin-12">
    <location>
        <begin position="25"/>
        <end position="103"/>
    </location>
</feature>
<feature type="repeat" description="1">
    <location>
        <begin position="34"/>
        <end position="38"/>
    </location>
</feature>
<feature type="repeat" description="2">
    <location>
        <begin position="39"/>
        <end position="43"/>
    </location>
</feature>
<feature type="repeat" description="3; approximate">
    <location>
        <begin position="44"/>
        <end position="48"/>
    </location>
</feature>
<feature type="repeat" description="4">
    <location>
        <begin position="49"/>
        <end position="53"/>
    </location>
</feature>
<feature type="repeat" description="5">
    <location>
        <begin position="54"/>
        <end position="58"/>
    </location>
</feature>
<feature type="repeat" description="6">
    <location>
        <begin position="59"/>
        <end position="63"/>
    </location>
</feature>
<feature type="repeat" description="7">
    <location>
        <begin position="64"/>
        <end position="68"/>
    </location>
</feature>
<feature type="repeat" description="8">
    <location>
        <begin position="69"/>
        <end position="73"/>
    </location>
</feature>
<feature type="repeat" description="9">
    <location>
        <begin position="74"/>
        <end position="78"/>
    </location>
</feature>
<feature type="repeat" description="10; approximate">
    <location>
        <begin position="79"/>
        <end position="83"/>
    </location>
</feature>
<feature type="repeat" description="11">
    <location>
        <begin position="84"/>
        <end position="88"/>
    </location>
</feature>
<feature type="region of interest" description="Disordered" evidence="2">
    <location>
        <begin position="34"/>
        <end position="103"/>
    </location>
</feature>
<feature type="region of interest" description="11 X 5 AA approximate tandem repeats of P-P-[QVHR]-[TNKH]-[KED]">
    <location>
        <begin position="34"/>
        <end position="88"/>
    </location>
</feature>
<feature type="compositionally biased region" description="Basic and acidic residues" evidence="2">
    <location>
        <begin position="45"/>
        <end position="103"/>
    </location>
</feature>
<comment type="function">
    <text>Involved in the infection process during the plant-rhizobium interaction.</text>
</comment>
<comment type="subcellular location">
    <subcellularLocation>
        <location evidence="3">Secreted</location>
        <location evidence="3">Cell wall</location>
    </subcellularLocation>
</comment>
<comment type="tissue specificity">
    <text>Root nodules.</text>
</comment>
<comment type="induction">
    <text>By soluble compounds from rhizobium (in cells through which the infection thread is migrating and also in cells that do not yet contain an infection thread).</text>
</comment>
<comment type="similarity">
    <text evidence="3">Belongs to the plant proline-rich protein superfamily. ENOD12 family.</text>
</comment>
<accession>P30365</accession>
<keyword id="KW-0134">Cell wall</keyword>
<keyword id="KW-0536">Nodulation</keyword>
<keyword id="KW-0677">Repeat</keyword>
<keyword id="KW-0964">Secreted</keyword>
<keyword id="KW-0732">Signal</keyword>
<proteinExistence type="evidence at transcript level"/>
<evidence type="ECO:0000255" key="1"/>
<evidence type="ECO:0000256" key="2">
    <source>
        <dbReference type="SAM" id="MobiDB-lite"/>
    </source>
</evidence>
<evidence type="ECO:0000305" key="3"/>
<name>NO12_MEDTR</name>